<proteinExistence type="inferred from homology"/>
<dbReference type="EMBL" id="CP000472">
    <property type="protein sequence ID" value="ACJ28778.1"/>
    <property type="molecule type" value="Genomic_DNA"/>
</dbReference>
<dbReference type="RefSeq" id="WP_020912146.1">
    <property type="nucleotide sequence ID" value="NC_011566.1"/>
</dbReference>
<dbReference type="SMR" id="B8CNE4"/>
<dbReference type="STRING" id="225849.swp_2022"/>
<dbReference type="KEGG" id="swp:swp_2022"/>
<dbReference type="eggNOG" id="COG0198">
    <property type="taxonomic scope" value="Bacteria"/>
</dbReference>
<dbReference type="HOGENOM" id="CLU_093315_2_2_6"/>
<dbReference type="OrthoDB" id="9807419at2"/>
<dbReference type="Proteomes" id="UP000000753">
    <property type="component" value="Chromosome"/>
</dbReference>
<dbReference type="GO" id="GO:1990904">
    <property type="term" value="C:ribonucleoprotein complex"/>
    <property type="evidence" value="ECO:0007669"/>
    <property type="project" value="UniProtKB-KW"/>
</dbReference>
<dbReference type="GO" id="GO:0005840">
    <property type="term" value="C:ribosome"/>
    <property type="evidence" value="ECO:0007669"/>
    <property type="project" value="UniProtKB-KW"/>
</dbReference>
<dbReference type="GO" id="GO:0019843">
    <property type="term" value="F:rRNA binding"/>
    <property type="evidence" value="ECO:0007669"/>
    <property type="project" value="UniProtKB-UniRule"/>
</dbReference>
<dbReference type="GO" id="GO:0003735">
    <property type="term" value="F:structural constituent of ribosome"/>
    <property type="evidence" value="ECO:0007669"/>
    <property type="project" value="InterPro"/>
</dbReference>
<dbReference type="GO" id="GO:0006412">
    <property type="term" value="P:translation"/>
    <property type="evidence" value="ECO:0007669"/>
    <property type="project" value="UniProtKB-UniRule"/>
</dbReference>
<dbReference type="CDD" id="cd06089">
    <property type="entry name" value="KOW_RPL26"/>
    <property type="match status" value="1"/>
</dbReference>
<dbReference type="FunFam" id="2.30.30.30:FF:000004">
    <property type="entry name" value="50S ribosomal protein L24"/>
    <property type="match status" value="1"/>
</dbReference>
<dbReference type="Gene3D" id="2.30.30.30">
    <property type="match status" value="1"/>
</dbReference>
<dbReference type="HAMAP" id="MF_01326_B">
    <property type="entry name" value="Ribosomal_uL24_B"/>
    <property type="match status" value="1"/>
</dbReference>
<dbReference type="InterPro" id="IPR005824">
    <property type="entry name" value="KOW"/>
</dbReference>
<dbReference type="InterPro" id="IPR014722">
    <property type="entry name" value="Rib_uL2_dom2"/>
</dbReference>
<dbReference type="InterPro" id="IPR003256">
    <property type="entry name" value="Ribosomal_uL24"/>
</dbReference>
<dbReference type="InterPro" id="IPR041988">
    <property type="entry name" value="Ribosomal_uL24_KOW"/>
</dbReference>
<dbReference type="InterPro" id="IPR008991">
    <property type="entry name" value="Translation_prot_SH3-like_sf"/>
</dbReference>
<dbReference type="NCBIfam" id="TIGR01079">
    <property type="entry name" value="rplX_bact"/>
    <property type="match status" value="1"/>
</dbReference>
<dbReference type="PANTHER" id="PTHR12903">
    <property type="entry name" value="MITOCHONDRIAL RIBOSOMAL PROTEIN L24"/>
    <property type="match status" value="1"/>
</dbReference>
<dbReference type="Pfam" id="PF00467">
    <property type="entry name" value="KOW"/>
    <property type="match status" value="1"/>
</dbReference>
<dbReference type="Pfam" id="PF17136">
    <property type="entry name" value="ribosomal_L24"/>
    <property type="match status" value="1"/>
</dbReference>
<dbReference type="SUPFAM" id="SSF50104">
    <property type="entry name" value="Translation proteins SH3-like domain"/>
    <property type="match status" value="1"/>
</dbReference>
<comment type="function">
    <text evidence="1">One of two assembly initiator proteins, it binds directly to the 5'-end of the 23S rRNA, where it nucleates assembly of the 50S subunit.</text>
</comment>
<comment type="function">
    <text evidence="1">One of the proteins that surrounds the polypeptide exit tunnel on the outside of the subunit.</text>
</comment>
<comment type="subunit">
    <text evidence="1">Part of the 50S ribosomal subunit.</text>
</comment>
<comment type="similarity">
    <text evidence="1">Belongs to the universal ribosomal protein uL24 family.</text>
</comment>
<evidence type="ECO:0000255" key="1">
    <source>
        <dbReference type="HAMAP-Rule" id="MF_01326"/>
    </source>
</evidence>
<evidence type="ECO:0000305" key="2"/>
<protein>
    <recommendedName>
        <fullName evidence="1">Large ribosomal subunit protein uL24</fullName>
    </recommendedName>
    <alternativeName>
        <fullName evidence="2">50S ribosomal protein L24</fullName>
    </alternativeName>
</protein>
<keyword id="KW-0687">Ribonucleoprotein</keyword>
<keyword id="KW-0689">Ribosomal protein</keyword>
<keyword id="KW-0694">RNA-binding</keyword>
<keyword id="KW-0699">rRNA-binding</keyword>
<accession>B8CNE4</accession>
<organism>
    <name type="scientific">Shewanella piezotolerans (strain WP3 / JCM 13877)</name>
    <dbReference type="NCBI Taxonomy" id="225849"/>
    <lineage>
        <taxon>Bacteria</taxon>
        <taxon>Pseudomonadati</taxon>
        <taxon>Pseudomonadota</taxon>
        <taxon>Gammaproteobacteria</taxon>
        <taxon>Alteromonadales</taxon>
        <taxon>Shewanellaceae</taxon>
        <taxon>Shewanella</taxon>
    </lineage>
</organism>
<reference key="1">
    <citation type="journal article" date="2008" name="PLoS ONE">
        <title>Environmental adaptation: genomic analysis of the piezotolerant and psychrotolerant deep-sea iron reducing bacterium Shewanella piezotolerans WP3.</title>
        <authorList>
            <person name="Wang F."/>
            <person name="Wang J."/>
            <person name="Jian H."/>
            <person name="Zhang B."/>
            <person name="Li S."/>
            <person name="Wang F."/>
            <person name="Zeng X."/>
            <person name="Gao L."/>
            <person name="Bartlett D.H."/>
            <person name="Yu J."/>
            <person name="Hu S."/>
            <person name="Xiao X."/>
        </authorList>
    </citation>
    <scope>NUCLEOTIDE SEQUENCE [LARGE SCALE GENOMIC DNA]</scope>
    <source>
        <strain>WP3 / JCM 13877</strain>
    </source>
</reference>
<gene>
    <name evidence="1" type="primary">rplX</name>
    <name type="ordered locus">swp_2022</name>
</gene>
<feature type="chain" id="PRO_1000142039" description="Large ribosomal subunit protein uL24">
    <location>
        <begin position="1"/>
        <end position="104"/>
    </location>
</feature>
<sequence>MAAKIRRQDEVIVLAGKDQGKRGKVSQVLTTGKLIVEGINLVKKHQKPNPQLGVAGGIVEQEAPIQASNVAIFNSATGKADRVGFRFEDGKKVRFFKSNSELVK</sequence>
<name>RL24_SHEPW</name>